<dbReference type="EMBL" id="AK295447">
    <property type="protein sequence ID" value="BAG58385.1"/>
    <property type="molecule type" value="mRNA"/>
</dbReference>
<dbReference type="EMBL" id="CR608238">
    <property type="status" value="NOT_ANNOTATED_CDS"/>
    <property type="molecule type" value="mRNA"/>
</dbReference>
<dbReference type="EMBL" id="AC055866">
    <property type="status" value="NOT_ANNOTATED_CDS"/>
    <property type="molecule type" value="Genomic_DNA"/>
</dbReference>
<dbReference type="EMBL" id="CH471152">
    <property type="protein sequence ID" value="EAW60903.1"/>
    <property type="molecule type" value="Genomic_DNA"/>
</dbReference>
<dbReference type="EMBL" id="BC004172">
    <property type="protein sequence ID" value="AAH04172.1"/>
    <property type="molecule type" value="mRNA"/>
</dbReference>
<dbReference type="EMBL" id="BC019324">
    <property type="protein sequence ID" value="AAH19324.1"/>
    <property type="molecule type" value="mRNA"/>
</dbReference>
<dbReference type="CCDS" id="CCDS58552.1">
    <molecule id="Q9BTE6-1"/>
</dbReference>
<dbReference type="RefSeq" id="NP_001129514.2">
    <molecule id="Q9BTE6-3"/>
    <property type="nucleotide sequence ID" value="NM_001136042.2"/>
</dbReference>
<dbReference type="RefSeq" id="NP_001248363.1">
    <molecule id="Q9BTE6-1"/>
    <property type="nucleotide sequence ID" value="NM_001261434.2"/>
</dbReference>
<dbReference type="RefSeq" id="NP_079543.1">
    <molecule id="Q9BTE6-2"/>
    <property type="nucleotide sequence ID" value="NM_025267.3"/>
</dbReference>
<dbReference type="SMR" id="Q9BTE6"/>
<dbReference type="BioGRID" id="123290">
    <property type="interactions" value="146"/>
</dbReference>
<dbReference type="BioGRID" id="3190353">
    <property type="interactions" value="22"/>
</dbReference>
<dbReference type="FunCoup" id="Q9BTE6">
    <property type="interactions" value="2205"/>
</dbReference>
<dbReference type="IntAct" id="Q9BTE6">
    <property type="interactions" value="190"/>
</dbReference>
<dbReference type="MINT" id="Q9BTE6"/>
<dbReference type="STRING" id="9606.ENSP00000400870"/>
<dbReference type="GlyGen" id="Q9BTE6">
    <property type="glycosylation" value="1 site, 1 O-linked glycan (1 site)"/>
</dbReference>
<dbReference type="iPTMnet" id="Q9BTE6"/>
<dbReference type="PhosphoSitePlus" id="Q9BTE6"/>
<dbReference type="BioMuta" id="AARSD1"/>
<dbReference type="DMDM" id="125987702"/>
<dbReference type="REPRODUCTION-2DPAGE" id="IPI00827636"/>
<dbReference type="jPOST" id="Q9BTE6"/>
<dbReference type="MassIVE" id="Q9BTE6"/>
<dbReference type="PaxDb" id="9606-ENSP00000400870"/>
<dbReference type="PeptideAtlas" id="Q9BTE6"/>
<dbReference type="ProteomicsDB" id="78985">
    <molecule id="Q9BTE6-1"/>
</dbReference>
<dbReference type="ProteomicsDB" id="78986">
    <molecule id="Q9BTE6-2"/>
</dbReference>
<dbReference type="ProteomicsDB" id="78987">
    <molecule id="Q9BTE6-3"/>
</dbReference>
<dbReference type="Pumba" id="Q9BTE6"/>
<dbReference type="Antibodypedia" id="17173">
    <property type="antibodies" value="81 antibodies from 19 providers"/>
</dbReference>
<dbReference type="Antibodypedia" id="67174">
    <property type="antibodies" value="181 antibodies from 15 providers"/>
</dbReference>
<dbReference type="DNASU" id="80755"/>
<dbReference type="Ensembl" id="ENST00000360221.8">
    <molecule id="Q9BTE6-2"/>
    <property type="protein sequence ID" value="ENSP00000353355.4"/>
    <property type="gene ID" value="ENSG00000108825.18"/>
</dbReference>
<dbReference type="Ensembl" id="ENST00000427569.7">
    <molecule id="Q9BTE6-1"/>
    <property type="protein sequence ID" value="ENSP00000400870.1"/>
    <property type="gene ID" value="ENSG00000266967.7"/>
</dbReference>
<dbReference type="GeneID" id="80755"/>
<dbReference type="KEGG" id="hsa:100885850"/>
<dbReference type="KEGG" id="hsa:80755"/>
<dbReference type="MANE-Select" id="ENST00000427569.7">
    <property type="protein sequence ID" value="ENSP00000400870.1"/>
    <property type="RefSeq nucleotide sequence ID" value="NM_001261434.2"/>
    <property type="RefSeq protein sequence ID" value="NP_001248363.1"/>
</dbReference>
<dbReference type="UCSC" id="uc002icd.3">
    <molecule id="Q9BTE6-1"/>
    <property type="organism name" value="human"/>
</dbReference>
<dbReference type="AGR" id="HGNC:28417"/>
<dbReference type="AGR" id="HGNC:43946"/>
<dbReference type="CTD" id="100885850"/>
<dbReference type="CTD" id="80755"/>
<dbReference type="GeneCards" id="AARSD1"/>
<dbReference type="GeneCards" id="PTGES3L-AARSD1"/>
<dbReference type="HGNC" id="HGNC:28417">
    <property type="gene designation" value="AARSD1"/>
</dbReference>
<dbReference type="HGNC" id="HGNC:43946">
    <property type="gene designation" value="PTGES3L-AARSD1"/>
</dbReference>
<dbReference type="HPA" id="ENSG00000108825">
    <property type="expression patterns" value="Tissue enhanced (skeletal muscle, tongue)"/>
</dbReference>
<dbReference type="HPA" id="ENSG00000266967">
    <property type="expression patterns" value="Low tissue specificity"/>
</dbReference>
<dbReference type="MIM" id="613212">
    <property type="type" value="gene"/>
</dbReference>
<dbReference type="neXtProt" id="NX_Q9BTE6"/>
<dbReference type="OpenTargets" id="ENSG00000108825"/>
<dbReference type="OpenTargets" id="ENSG00000266967"/>
<dbReference type="PharmGKB" id="PA142670464"/>
<dbReference type="VEuPathDB" id="HostDB:ENSG00000108825"/>
<dbReference type="VEuPathDB" id="HostDB:ENSG00000266967"/>
<dbReference type="eggNOG" id="KOG2105">
    <property type="taxonomic scope" value="Eukaryota"/>
</dbReference>
<dbReference type="GeneTree" id="ENSGT00940000156241"/>
<dbReference type="HOGENOM" id="CLU_004485_7_0_1"/>
<dbReference type="InParanoid" id="Q9BTE6"/>
<dbReference type="OMA" id="KYDTTSW"/>
<dbReference type="OrthoDB" id="288942at2759"/>
<dbReference type="PAN-GO" id="Q9BTE6">
    <property type="GO annotations" value="2 GO annotations based on evolutionary models"/>
</dbReference>
<dbReference type="PhylomeDB" id="Q9BTE6"/>
<dbReference type="TreeFam" id="TF323735"/>
<dbReference type="PathwayCommons" id="Q9BTE6"/>
<dbReference type="SignaLink" id="Q9BTE6"/>
<dbReference type="BioGRID-ORCS" id="100885850">
    <property type="hits" value="23 hits in 1066 CRISPR screens"/>
</dbReference>
<dbReference type="BioGRID-ORCS" id="80755">
    <property type="hits" value="16 hits in 1113 CRISPR screens"/>
</dbReference>
<dbReference type="Pharos" id="Q9BTE6">
    <property type="development level" value="Tdark"/>
</dbReference>
<dbReference type="PRO" id="PR:Q9BTE6"/>
<dbReference type="Proteomes" id="UP000005640">
    <property type="component" value="Chromosome 17"/>
</dbReference>
<dbReference type="RNAct" id="Q9BTE6">
    <property type="molecule type" value="protein"/>
</dbReference>
<dbReference type="Bgee" id="ENSG00000108825">
    <property type="expression patterns" value="Expressed in male germ line stem cell (sensu Vertebrata) in testis and 103 other cell types or tissues"/>
</dbReference>
<dbReference type="ExpressionAtlas" id="Q9BTE6">
    <property type="expression patterns" value="baseline and differential"/>
</dbReference>
<dbReference type="GO" id="GO:0005737">
    <property type="term" value="C:cytoplasm"/>
    <property type="evidence" value="ECO:0007669"/>
    <property type="project" value="UniProtKB-SubCell"/>
</dbReference>
<dbReference type="GO" id="GO:0005634">
    <property type="term" value="C:nucleus"/>
    <property type="evidence" value="ECO:0007005"/>
    <property type="project" value="UniProtKB"/>
</dbReference>
<dbReference type="GO" id="GO:0004813">
    <property type="term" value="F:alanine-tRNA ligase activity"/>
    <property type="evidence" value="ECO:0007669"/>
    <property type="project" value="InterPro"/>
</dbReference>
<dbReference type="GO" id="GO:0005524">
    <property type="term" value="F:ATP binding"/>
    <property type="evidence" value="ECO:0007669"/>
    <property type="project" value="InterPro"/>
</dbReference>
<dbReference type="GO" id="GO:0046872">
    <property type="term" value="F:metal ion binding"/>
    <property type="evidence" value="ECO:0007669"/>
    <property type="project" value="UniProtKB-KW"/>
</dbReference>
<dbReference type="GO" id="GO:0003676">
    <property type="term" value="F:nucleic acid binding"/>
    <property type="evidence" value="ECO:0007669"/>
    <property type="project" value="InterPro"/>
</dbReference>
<dbReference type="GO" id="GO:0002196">
    <property type="term" value="F:Ser-tRNA(Ala) deacylase activity"/>
    <property type="evidence" value="ECO:0000318"/>
    <property type="project" value="GO_Central"/>
</dbReference>
<dbReference type="GO" id="GO:0006419">
    <property type="term" value="P:alanyl-tRNA aminoacylation"/>
    <property type="evidence" value="ECO:0007669"/>
    <property type="project" value="InterPro"/>
</dbReference>
<dbReference type="GO" id="GO:0006450">
    <property type="term" value="P:regulation of translational fidelity"/>
    <property type="evidence" value="ECO:0000318"/>
    <property type="project" value="GO_Central"/>
</dbReference>
<dbReference type="FunFam" id="3.30.980.10:FF:000007">
    <property type="entry name" value="alanyl-tRNA editing protein Aarsd1"/>
    <property type="match status" value="1"/>
</dbReference>
<dbReference type="FunFam" id="2.40.30.130:FF:000012">
    <property type="entry name" value="Predicted gene, 27029"/>
    <property type="match status" value="1"/>
</dbReference>
<dbReference type="Gene3D" id="2.40.30.130">
    <property type="match status" value="1"/>
</dbReference>
<dbReference type="Gene3D" id="3.30.980.10">
    <property type="entry name" value="Threonyl-trna Synthetase, Chain A, domain 2"/>
    <property type="match status" value="1"/>
</dbReference>
<dbReference type="InterPro" id="IPR018165">
    <property type="entry name" value="Ala-tRNA-synth_IIc_core"/>
</dbReference>
<dbReference type="InterPro" id="IPR051335">
    <property type="entry name" value="Alanyl-tRNA_Editing_Enzymes"/>
</dbReference>
<dbReference type="InterPro" id="IPR018163">
    <property type="entry name" value="Thr/Ala-tRNA-synth_IIc_edit"/>
</dbReference>
<dbReference type="InterPro" id="IPR009000">
    <property type="entry name" value="Transl_B-barrel_sf"/>
</dbReference>
<dbReference type="InterPro" id="IPR012947">
    <property type="entry name" value="tRNA_SAD"/>
</dbReference>
<dbReference type="PANTHER" id="PTHR43462">
    <property type="entry name" value="ALANYL-TRNA EDITING PROTEIN"/>
    <property type="match status" value="1"/>
</dbReference>
<dbReference type="PANTHER" id="PTHR43462:SF1">
    <property type="entry name" value="ALANYL-TRNA EDITING PROTEIN AARSD1"/>
    <property type="match status" value="1"/>
</dbReference>
<dbReference type="Pfam" id="PF07973">
    <property type="entry name" value="tRNA_SAD"/>
    <property type="match status" value="1"/>
</dbReference>
<dbReference type="SMART" id="SM00863">
    <property type="entry name" value="tRNA_SAD"/>
    <property type="match status" value="1"/>
</dbReference>
<dbReference type="SUPFAM" id="SSF55186">
    <property type="entry name" value="ThrRS/AlaRS common domain"/>
    <property type="match status" value="1"/>
</dbReference>
<dbReference type="SUPFAM" id="SSF50447">
    <property type="entry name" value="Translation proteins"/>
    <property type="match status" value="1"/>
</dbReference>
<dbReference type="PROSITE" id="PS50860">
    <property type="entry name" value="AA_TRNA_LIGASE_II_ALA"/>
    <property type="match status" value="1"/>
</dbReference>
<protein>
    <recommendedName>
        <fullName>Alanyl-tRNA editing protein Aarsd1</fullName>
    </recommendedName>
    <alternativeName>
        <fullName>Alanyl-tRNA synthetase domain-containing protein 1</fullName>
    </alternativeName>
</protein>
<comment type="function">
    <text evidence="1">Functions in trans to edit the amino acid moiety from incorrectly charged tRNA(Ala).</text>
</comment>
<comment type="cofactor">
    <cofactor evidence="5">
        <name>Zn(2+)</name>
        <dbReference type="ChEBI" id="CHEBI:29105"/>
    </cofactor>
    <text evidence="5">Binds 1 zinc ion per subunit.</text>
</comment>
<comment type="interaction">
    <interactant intactId="EBI-9357295">
        <id>Q9BTE6-2</id>
    </interactant>
    <interactant intactId="EBI-11957452">
        <id>Q4LE39-3</id>
        <label>ARID4B</label>
    </interactant>
    <organismsDiffer>false</organismsDiffer>
    <experiments>3</experiments>
</comment>
<comment type="interaction">
    <interactant intactId="EBI-9357295">
        <id>Q9BTE6-2</id>
    </interactant>
    <interactant intactId="EBI-1176455">
        <id>P63172</id>
        <label>DYNLT1</label>
    </interactant>
    <organismsDiffer>false</organismsDiffer>
    <experiments>3</experiments>
</comment>
<comment type="interaction">
    <interactant intactId="EBI-9357295">
        <id>Q9BTE6-2</id>
    </interactant>
    <interactant intactId="EBI-10226932">
        <id>Q0VG06-3</id>
        <label>FAAP100</label>
    </interactant>
    <organismsDiffer>false</organismsDiffer>
    <experiments>3</experiments>
</comment>
<comment type="interaction">
    <interactant intactId="EBI-9357295">
        <id>Q9BTE6-2</id>
    </interactant>
    <interactant intactId="EBI-721328">
        <id>P58340</id>
        <label>MLF1</label>
    </interactant>
    <organismsDiffer>false</organismsDiffer>
    <experiments>2</experiments>
</comment>
<comment type="interaction">
    <interactant intactId="EBI-9357295">
        <id>Q9BTE6-2</id>
    </interactant>
    <interactant intactId="EBI-12037215">
        <id>Q5MJ09</id>
        <label>SPANXN3</label>
    </interactant>
    <organismsDiffer>false</organismsDiffer>
    <experiments>3</experiments>
</comment>
<comment type="interaction">
    <interactant intactId="EBI-9357295">
        <id>Q9BTE6-2</id>
    </interactant>
    <interactant intactId="EBI-11993364">
        <id>Q9H8W5-2</id>
        <label>TRIM45</label>
    </interactant>
    <organismsDiffer>false</organismsDiffer>
    <experiments>3</experiments>
</comment>
<comment type="interaction">
    <interactant intactId="EBI-9357295">
        <id>Q9BTE6-2</id>
    </interactant>
    <interactant intactId="EBI-746595">
        <id>Q96E35</id>
        <label>ZMYND19</label>
    </interactant>
    <organismsDiffer>false</organismsDiffer>
    <experiments>3</experiments>
</comment>
<comment type="interaction">
    <interactant intactId="EBI-9357295">
        <id>Q9BTE6-2</id>
    </interactant>
    <interactant intactId="EBI-6874731">
        <id>O15231</id>
        <label>ZNF185</label>
    </interactant>
    <organismsDiffer>false</organismsDiffer>
    <experiments>3</experiments>
</comment>
<comment type="interaction">
    <interactant intactId="EBI-9357295">
        <id>Q9BTE6-2</id>
    </interactant>
    <interactant intactId="EBI-9356686">
        <id>Q96BE0</id>
    </interactant>
    <organismsDiffer>false</organismsDiffer>
    <experiments>2</experiments>
</comment>
<comment type="subcellular location">
    <subcellularLocation>
        <location evidence="1">Cytoplasm</location>
    </subcellularLocation>
</comment>
<comment type="alternative products">
    <event type="alternative splicing"/>
    <isoform>
        <id>Q9BTE6-1</id>
        <name>1</name>
        <sequence type="displayed"/>
    </isoform>
    <isoform>
        <id>Q9BTE6-2</id>
        <name>2</name>
        <sequence type="described" ref="VSP_023014"/>
    </isoform>
    <isoform>
        <id>Q9BTE6-3</id>
        <name>3</name>
        <sequence type="described" ref="VSP_043142"/>
    </isoform>
</comment>
<comment type="miscellaneous">
    <molecule>Isoform 2</molecule>
    <text evidence="5">Based on a readthrough transcript which may produce a PTGES3L-AARSD1 fusion protein.</text>
</comment>
<comment type="miscellaneous">
    <molecule>Isoform 3</molecule>
    <text evidence="5">Based on a readthrough transcript which may produce a PTGES3L-AARSD1 fusion protein.</text>
</comment>
<comment type="similarity">
    <text evidence="5">Belongs to the class-II aminoacyl-tRNA synthetase family. Alax-L subfamily.</text>
</comment>
<reference key="1">
    <citation type="journal article" date="2004" name="Nat. Genet.">
        <title>Complete sequencing and characterization of 21,243 full-length human cDNAs.</title>
        <authorList>
            <person name="Ota T."/>
            <person name="Suzuki Y."/>
            <person name="Nishikawa T."/>
            <person name="Otsuki T."/>
            <person name="Sugiyama T."/>
            <person name="Irie R."/>
            <person name="Wakamatsu A."/>
            <person name="Hayashi K."/>
            <person name="Sato H."/>
            <person name="Nagai K."/>
            <person name="Kimura K."/>
            <person name="Makita H."/>
            <person name="Sekine M."/>
            <person name="Obayashi M."/>
            <person name="Nishi T."/>
            <person name="Shibahara T."/>
            <person name="Tanaka T."/>
            <person name="Ishii S."/>
            <person name="Yamamoto J."/>
            <person name="Saito K."/>
            <person name="Kawai Y."/>
            <person name="Isono Y."/>
            <person name="Nakamura Y."/>
            <person name="Nagahari K."/>
            <person name="Murakami K."/>
            <person name="Yasuda T."/>
            <person name="Iwayanagi T."/>
            <person name="Wagatsuma M."/>
            <person name="Shiratori A."/>
            <person name="Sudo H."/>
            <person name="Hosoiri T."/>
            <person name="Kaku Y."/>
            <person name="Kodaira H."/>
            <person name="Kondo H."/>
            <person name="Sugawara M."/>
            <person name="Takahashi M."/>
            <person name="Kanda K."/>
            <person name="Yokoi T."/>
            <person name="Furuya T."/>
            <person name="Kikkawa E."/>
            <person name="Omura Y."/>
            <person name="Abe K."/>
            <person name="Kamihara K."/>
            <person name="Katsuta N."/>
            <person name="Sato K."/>
            <person name="Tanikawa M."/>
            <person name="Yamazaki M."/>
            <person name="Ninomiya K."/>
            <person name="Ishibashi T."/>
            <person name="Yamashita H."/>
            <person name="Murakawa K."/>
            <person name="Fujimori K."/>
            <person name="Tanai H."/>
            <person name="Kimata M."/>
            <person name="Watanabe M."/>
            <person name="Hiraoka S."/>
            <person name="Chiba Y."/>
            <person name="Ishida S."/>
            <person name="Ono Y."/>
            <person name="Takiguchi S."/>
            <person name="Watanabe S."/>
            <person name="Yosida M."/>
            <person name="Hotuta T."/>
            <person name="Kusano J."/>
            <person name="Kanehori K."/>
            <person name="Takahashi-Fujii A."/>
            <person name="Hara H."/>
            <person name="Tanase T.-O."/>
            <person name="Nomura Y."/>
            <person name="Togiya S."/>
            <person name="Komai F."/>
            <person name="Hara R."/>
            <person name="Takeuchi K."/>
            <person name="Arita M."/>
            <person name="Imose N."/>
            <person name="Musashino K."/>
            <person name="Yuuki H."/>
            <person name="Oshima A."/>
            <person name="Sasaki N."/>
            <person name="Aotsuka S."/>
            <person name="Yoshikawa Y."/>
            <person name="Matsunawa H."/>
            <person name="Ichihara T."/>
            <person name="Shiohata N."/>
            <person name="Sano S."/>
            <person name="Moriya S."/>
            <person name="Momiyama H."/>
            <person name="Satoh N."/>
            <person name="Takami S."/>
            <person name="Terashima Y."/>
            <person name="Suzuki O."/>
            <person name="Nakagawa S."/>
            <person name="Senoh A."/>
            <person name="Mizoguchi H."/>
            <person name="Goto Y."/>
            <person name="Shimizu F."/>
            <person name="Wakebe H."/>
            <person name="Hishigaki H."/>
            <person name="Watanabe T."/>
            <person name="Sugiyama A."/>
            <person name="Takemoto M."/>
            <person name="Kawakami B."/>
            <person name="Yamazaki M."/>
            <person name="Watanabe K."/>
            <person name="Kumagai A."/>
            <person name="Itakura S."/>
            <person name="Fukuzumi Y."/>
            <person name="Fujimori Y."/>
            <person name="Komiyama M."/>
            <person name="Tashiro H."/>
            <person name="Tanigami A."/>
            <person name="Fujiwara T."/>
            <person name="Ono T."/>
            <person name="Yamada K."/>
            <person name="Fujii Y."/>
            <person name="Ozaki K."/>
            <person name="Hirao M."/>
            <person name="Ohmori Y."/>
            <person name="Kawabata A."/>
            <person name="Hikiji T."/>
            <person name="Kobatake N."/>
            <person name="Inagaki H."/>
            <person name="Ikema Y."/>
            <person name="Okamoto S."/>
            <person name="Okitani R."/>
            <person name="Kawakami T."/>
            <person name="Noguchi S."/>
            <person name="Itoh T."/>
            <person name="Shigeta K."/>
            <person name="Senba T."/>
            <person name="Matsumura K."/>
            <person name="Nakajima Y."/>
            <person name="Mizuno T."/>
            <person name="Morinaga M."/>
            <person name="Sasaki M."/>
            <person name="Togashi T."/>
            <person name="Oyama M."/>
            <person name="Hata H."/>
            <person name="Watanabe M."/>
            <person name="Komatsu T."/>
            <person name="Mizushima-Sugano J."/>
            <person name="Satoh T."/>
            <person name="Shirai Y."/>
            <person name="Takahashi Y."/>
            <person name="Nakagawa K."/>
            <person name="Okumura K."/>
            <person name="Nagase T."/>
            <person name="Nomura N."/>
            <person name="Kikuchi H."/>
            <person name="Masuho Y."/>
            <person name="Yamashita R."/>
            <person name="Nakai K."/>
            <person name="Yada T."/>
            <person name="Nakamura Y."/>
            <person name="Ohara O."/>
            <person name="Isogai T."/>
            <person name="Sugano S."/>
        </authorList>
    </citation>
    <scope>NUCLEOTIDE SEQUENCE [LARGE SCALE MRNA] (ISOFORM 3)</scope>
    <source>
        <tissue>Hippocampus</tissue>
    </source>
</reference>
<reference key="2">
    <citation type="submission" date="2004-07" db="EMBL/GenBank/DDBJ databases">
        <title>Full-length cDNA libraries and normalization.</title>
        <authorList>
            <person name="Li W.B."/>
            <person name="Gruber C."/>
            <person name="Jessee J."/>
            <person name="Polayes D."/>
        </authorList>
    </citation>
    <scope>NUCLEOTIDE SEQUENCE [LARGE SCALE MRNA] (ISOFORM 1)</scope>
    <source>
        <tissue>Neuroblastoma</tissue>
    </source>
</reference>
<reference key="3">
    <citation type="journal article" date="2006" name="Nature">
        <title>DNA sequence of human chromosome 17 and analysis of rearrangement in the human lineage.</title>
        <authorList>
            <person name="Zody M.C."/>
            <person name="Garber M."/>
            <person name="Adams D.J."/>
            <person name="Sharpe T."/>
            <person name="Harrow J."/>
            <person name="Lupski J.R."/>
            <person name="Nicholson C."/>
            <person name="Searle S.M."/>
            <person name="Wilming L."/>
            <person name="Young S.K."/>
            <person name="Abouelleil A."/>
            <person name="Allen N.R."/>
            <person name="Bi W."/>
            <person name="Bloom T."/>
            <person name="Borowsky M.L."/>
            <person name="Bugalter B.E."/>
            <person name="Butler J."/>
            <person name="Chang J.L."/>
            <person name="Chen C.-K."/>
            <person name="Cook A."/>
            <person name="Corum B."/>
            <person name="Cuomo C.A."/>
            <person name="de Jong P.J."/>
            <person name="DeCaprio D."/>
            <person name="Dewar K."/>
            <person name="FitzGerald M."/>
            <person name="Gilbert J."/>
            <person name="Gibson R."/>
            <person name="Gnerre S."/>
            <person name="Goldstein S."/>
            <person name="Grafham D.V."/>
            <person name="Grocock R."/>
            <person name="Hafez N."/>
            <person name="Hagopian D.S."/>
            <person name="Hart E."/>
            <person name="Norman C.H."/>
            <person name="Humphray S."/>
            <person name="Jaffe D.B."/>
            <person name="Jones M."/>
            <person name="Kamal M."/>
            <person name="Khodiyar V.K."/>
            <person name="LaButti K."/>
            <person name="Laird G."/>
            <person name="Lehoczky J."/>
            <person name="Liu X."/>
            <person name="Lokyitsang T."/>
            <person name="Loveland J."/>
            <person name="Lui A."/>
            <person name="Macdonald P."/>
            <person name="Major J.E."/>
            <person name="Matthews L."/>
            <person name="Mauceli E."/>
            <person name="McCarroll S.A."/>
            <person name="Mihalev A.H."/>
            <person name="Mudge J."/>
            <person name="Nguyen C."/>
            <person name="Nicol R."/>
            <person name="O'Leary S.B."/>
            <person name="Osoegawa K."/>
            <person name="Schwartz D.C."/>
            <person name="Shaw-Smith C."/>
            <person name="Stankiewicz P."/>
            <person name="Steward C."/>
            <person name="Swarbreck D."/>
            <person name="Venkataraman V."/>
            <person name="Whittaker C.A."/>
            <person name="Yang X."/>
            <person name="Zimmer A.R."/>
            <person name="Bradley A."/>
            <person name="Hubbard T."/>
            <person name="Birren B.W."/>
            <person name="Rogers J."/>
            <person name="Lander E.S."/>
            <person name="Nusbaum C."/>
        </authorList>
    </citation>
    <scope>NUCLEOTIDE SEQUENCE [LARGE SCALE GENOMIC DNA]</scope>
</reference>
<reference key="4">
    <citation type="submission" date="2005-07" db="EMBL/GenBank/DDBJ databases">
        <authorList>
            <person name="Mural R.J."/>
            <person name="Istrail S."/>
            <person name="Sutton G."/>
            <person name="Florea L."/>
            <person name="Halpern A.L."/>
            <person name="Mobarry C.M."/>
            <person name="Lippert R."/>
            <person name="Walenz B."/>
            <person name="Shatkay H."/>
            <person name="Dew I."/>
            <person name="Miller J.R."/>
            <person name="Flanigan M.J."/>
            <person name="Edwards N.J."/>
            <person name="Bolanos R."/>
            <person name="Fasulo D."/>
            <person name="Halldorsson B.V."/>
            <person name="Hannenhalli S."/>
            <person name="Turner R."/>
            <person name="Yooseph S."/>
            <person name="Lu F."/>
            <person name="Nusskern D.R."/>
            <person name="Shue B.C."/>
            <person name="Zheng X.H."/>
            <person name="Zhong F."/>
            <person name="Delcher A.L."/>
            <person name="Huson D.H."/>
            <person name="Kravitz S.A."/>
            <person name="Mouchard L."/>
            <person name="Reinert K."/>
            <person name="Remington K.A."/>
            <person name="Clark A.G."/>
            <person name="Waterman M.S."/>
            <person name="Eichler E.E."/>
            <person name="Adams M.D."/>
            <person name="Hunkapiller M.W."/>
            <person name="Myers E.W."/>
            <person name="Venter J.C."/>
        </authorList>
    </citation>
    <scope>NUCLEOTIDE SEQUENCE [LARGE SCALE GENOMIC DNA]</scope>
</reference>
<reference key="5">
    <citation type="journal article" date="2004" name="Genome Res.">
        <title>The status, quality, and expansion of the NIH full-length cDNA project: the Mammalian Gene Collection (MGC).</title>
        <authorList>
            <consortium name="The MGC Project Team"/>
        </authorList>
    </citation>
    <scope>NUCLEOTIDE SEQUENCE [LARGE SCALE MRNA] (ISOFORM 2)</scope>
    <source>
        <tissue>Lung</tissue>
    </source>
</reference>
<reference key="6">
    <citation type="journal article" date="2011" name="BMC Syst. Biol.">
        <title>Initial characterization of the human central proteome.</title>
        <authorList>
            <person name="Burkard T.R."/>
            <person name="Planyavsky M."/>
            <person name="Kaupe I."/>
            <person name="Breitwieser F.P."/>
            <person name="Buerckstuemmer T."/>
            <person name="Bennett K.L."/>
            <person name="Superti-Furga G."/>
            <person name="Colinge J."/>
        </authorList>
    </citation>
    <scope>IDENTIFICATION BY MASS SPECTROMETRY [LARGE SCALE ANALYSIS]</scope>
</reference>
<reference key="7">
    <citation type="journal article" date="2013" name="J. Proteome Res.">
        <title>Toward a comprehensive characterization of a human cancer cell phosphoproteome.</title>
        <authorList>
            <person name="Zhou H."/>
            <person name="Di Palma S."/>
            <person name="Preisinger C."/>
            <person name="Peng M."/>
            <person name="Polat A.N."/>
            <person name="Heck A.J."/>
            <person name="Mohammed S."/>
        </authorList>
    </citation>
    <scope>PHOSPHORYLATION [LARGE SCALE ANALYSIS] AT SER-174</scope>
    <scope>IDENTIFICATION BY MASS SPECTROMETRY [LARGE SCALE ANALYSIS]</scope>
    <source>
        <tissue>Cervix carcinoma</tissue>
        <tissue>Erythroleukemia</tissue>
    </source>
</reference>
<organism>
    <name type="scientific">Homo sapiens</name>
    <name type="common">Human</name>
    <dbReference type="NCBI Taxonomy" id="9606"/>
    <lineage>
        <taxon>Eukaryota</taxon>
        <taxon>Metazoa</taxon>
        <taxon>Chordata</taxon>
        <taxon>Craniata</taxon>
        <taxon>Vertebrata</taxon>
        <taxon>Euteleostomi</taxon>
        <taxon>Mammalia</taxon>
        <taxon>Eutheria</taxon>
        <taxon>Euarchontoglires</taxon>
        <taxon>Primates</taxon>
        <taxon>Haplorrhini</taxon>
        <taxon>Catarrhini</taxon>
        <taxon>Hominidae</taxon>
        <taxon>Homo</taxon>
    </lineage>
</organism>
<proteinExistence type="evidence at protein level"/>
<gene>
    <name type="primary">AARSD1</name>
</gene>
<sequence>MAFWCQRDSYAREFTTTVVSCCPAELQTEGSNGKKEVLSGFQVVLEDTVLFPEGGGQPDDRGTINDISVLRVTRRGEQADHFTQTPLDPGSQVLVRVDWERRFDHMQQHSGQHLITAVADHLFKLKTTSWELGRFRSAIELDTPSMTAEQVAAIEQSVNEKIRDRLPVNVRELSLDDPEVEQVSGRGLPDDHAGPIRVVNIEGVDSNMCCGTHVSNLSDLQVIKILGTEKGKKNRTNLIFLSGNRVLKWMERSHGTEKALTALLKCGAEDHVEAVKKLQNSTKILQKNNLNLLRDLAVHIAHSLRNSPDWGGVVILHRKEGDSEFMNIIANEIGSEETLLFLTVGDEKGGGLFLLAGPPASVETLGPRVAEVLEGKGAGKKGRFQGKATKMSRRMEAQALLQDYISTQSAKE</sequence>
<accession>Q9BTE6</accession>
<accession>B4DI73</accession>
<keyword id="KW-0025">Alternative splicing</keyword>
<keyword id="KW-0963">Cytoplasm</keyword>
<keyword id="KW-0479">Metal-binding</keyword>
<keyword id="KW-0597">Phosphoprotein</keyword>
<keyword id="KW-0648">Protein biosynthesis</keyword>
<keyword id="KW-1267">Proteomics identification</keyword>
<keyword id="KW-1185">Reference proteome</keyword>
<keyword id="KW-0862">Zinc</keyword>
<evidence type="ECO:0000250" key="1"/>
<evidence type="ECO:0000255" key="2"/>
<evidence type="ECO:0000303" key="3">
    <source>
    </source>
</evidence>
<evidence type="ECO:0000303" key="4">
    <source>
    </source>
</evidence>
<evidence type="ECO:0000305" key="5"/>
<evidence type="ECO:0007744" key="6">
    <source>
    </source>
</evidence>
<feature type="chain" id="PRO_0000277465" description="Alanyl-tRNA editing protein Aarsd1">
    <location>
        <begin position="1"/>
        <end position="412"/>
    </location>
</feature>
<feature type="binding site" evidence="2">
    <location>
        <position position="109"/>
    </location>
    <ligand>
        <name>Zn(2+)</name>
        <dbReference type="ChEBI" id="CHEBI:29105"/>
    </ligand>
</feature>
<feature type="binding site" evidence="2">
    <location>
        <position position="113"/>
    </location>
    <ligand>
        <name>Zn(2+)</name>
        <dbReference type="ChEBI" id="CHEBI:29105"/>
    </ligand>
</feature>
<feature type="binding site" evidence="2">
    <location>
        <position position="209"/>
    </location>
    <ligand>
        <name>Zn(2+)</name>
        <dbReference type="ChEBI" id="CHEBI:29105"/>
    </ligand>
</feature>
<feature type="binding site" evidence="2">
    <location>
        <position position="213"/>
    </location>
    <ligand>
        <name>Zn(2+)</name>
        <dbReference type="ChEBI" id="CHEBI:29105"/>
    </ligand>
</feature>
<feature type="modified residue" description="Phosphoserine" evidence="6">
    <location>
        <position position="174"/>
    </location>
</feature>
<feature type="splice variant" id="VSP_023014" description="In isoform 2." evidence="4">
    <original>MAFWCQRDSYARE</original>
    <variation>MEFCVEDSTDVHVLIEDHRIVFSCKNADGVELYNEIEFYAKVNSKDSQDKRSSRSITCFVRKWKEKVAWPRLTKEDIKPVWLSVDFDNWRDWEGDEEMELAHVEHYAELLKKVSTKRPPPAMDDLD</variation>
    <location>
        <begin position="1"/>
        <end position="13"/>
    </location>
</feature>
<feature type="splice variant" id="VSP_043142" description="In isoform 3." evidence="3">
    <original>MAFWCQRDSYARE</original>
    <variation>MFSLPLNCSPDHIRRGSCWGRPQDLKIAAPAWNSKCHPGAGAAMARQHARTLWYDRPRYVFMEFCVEDSTDVHVLIEDHRIVFSCKNADGVELYNEIEFYAKVNSKDSQDKRSSRSITCFVRKWKEKVAWPRLTKEDIKPVWLSVDFDNWRDWEGDEEMELAHVEHYAELLKKVSTKRPPPAMDDLD</variation>
    <location>
        <begin position="1"/>
        <end position="13"/>
    </location>
</feature>
<name>AASD1_HUMAN</name>